<evidence type="ECO:0000255" key="1">
    <source>
        <dbReference type="HAMAP-Rule" id="MF_00321"/>
    </source>
</evidence>
<dbReference type="EMBL" id="CP000653">
    <property type="protein sequence ID" value="ABP62755.1"/>
    <property type="molecule type" value="Genomic_DNA"/>
</dbReference>
<dbReference type="RefSeq" id="WP_015961059.1">
    <property type="nucleotide sequence ID" value="NC_009436.1"/>
</dbReference>
<dbReference type="SMR" id="A4WGC5"/>
<dbReference type="STRING" id="399742.Ent638_4101"/>
<dbReference type="KEGG" id="ent:Ent638_4101"/>
<dbReference type="eggNOG" id="COG0218">
    <property type="taxonomic scope" value="Bacteria"/>
</dbReference>
<dbReference type="HOGENOM" id="CLU_033732_1_0_6"/>
<dbReference type="OrthoDB" id="9804921at2"/>
<dbReference type="Proteomes" id="UP000000230">
    <property type="component" value="Chromosome"/>
</dbReference>
<dbReference type="GO" id="GO:0005829">
    <property type="term" value="C:cytosol"/>
    <property type="evidence" value="ECO:0007669"/>
    <property type="project" value="TreeGrafter"/>
</dbReference>
<dbReference type="GO" id="GO:0005525">
    <property type="term" value="F:GTP binding"/>
    <property type="evidence" value="ECO:0007669"/>
    <property type="project" value="UniProtKB-UniRule"/>
</dbReference>
<dbReference type="GO" id="GO:0046872">
    <property type="term" value="F:metal ion binding"/>
    <property type="evidence" value="ECO:0007669"/>
    <property type="project" value="UniProtKB-KW"/>
</dbReference>
<dbReference type="GO" id="GO:0000917">
    <property type="term" value="P:division septum assembly"/>
    <property type="evidence" value="ECO:0007669"/>
    <property type="project" value="UniProtKB-KW"/>
</dbReference>
<dbReference type="CDD" id="cd01876">
    <property type="entry name" value="YihA_EngB"/>
    <property type="match status" value="1"/>
</dbReference>
<dbReference type="FunFam" id="3.40.50.300:FF:000098">
    <property type="entry name" value="Probable GTP-binding protein EngB"/>
    <property type="match status" value="1"/>
</dbReference>
<dbReference type="Gene3D" id="3.40.50.300">
    <property type="entry name" value="P-loop containing nucleotide triphosphate hydrolases"/>
    <property type="match status" value="1"/>
</dbReference>
<dbReference type="HAMAP" id="MF_00321">
    <property type="entry name" value="GTPase_EngB"/>
    <property type="match status" value="1"/>
</dbReference>
<dbReference type="InterPro" id="IPR030393">
    <property type="entry name" value="G_ENGB_dom"/>
</dbReference>
<dbReference type="InterPro" id="IPR006073">
    <property type="entry name" value="GTP-bd"/>
</dbReference>
<dbReference type="InterPro" id="IPR019987">
    <property type="entry name" value="GTP-bd_ribosome_bio_YsxC"/>
</dbReference>
<dbReference type="InterPro" id="IPR027417">
    <property type="entry name" value="P-loop_NTPase"/>
</dbReference>
<dbReference type="NCBIfam" id="TIGR03598">
    <property type="entry name" value="GTPase_YsxC"/>
    <property type="match status" value="1"/>
</dbReference>
<dbReference type="PANTHER" id="PTHR11649:SF13">
    <property type="entry name" value="ENGB-TYPE G DOMAIN-CONTAINING PROTEIN"/>
    <property type="match status" value="1"/>
</dbReference>
<dbReference type="PANTHER" id="PTHR11649">
    <property type="entry name" value="MSS1/TRME-RELATED GTP-BINDING PROTEIN"/>
    <property type="match status" value="1"/>
</dbReference>
<dbReference type="Pfam" id="PF01926">
    <property type="entry name" value="MMR_HSR1"/>
    <property type="match status" value="1"/>
</dbReference>
<dbReference type="SUPFAM" id="SSF52540">
    <property type="entry name" value="P-loop containing nucleoside triphosphate hydrolases"/>
    <property type="match status" value="1"/>
</dbReference>
<dbReference type="PROSITE" id="PS51706">
    <property type="entry name" value="G_ENGB"/>
    <property type="match status" value="1"/>
</dbReference>
<sequence>MTNWNYQQTNFVTSAPDIRHLPPDTGIEVAFAGRSNAGKSSALNTLTNQRSLARTSKTPGRTQLINLFEVAEGKRLVDLPGYGYAEVPEEVKLKWQKALGEYLEKRQCLKGLVVLMDIRHPLKDLDQQMIHWAVASEIPVLVLLTKSDKLASGARKAQLKMVREAALAFNGDVQIETFSSLKKQGVDVLRQKLDSWYNGLEPAVEAEE</sequence>
<keyword id="KW-0131">Cell cycle</keyword>
<keyword id="KW-0132">Cell division</keyword>
<keyword id="KW-0342">GTP-binding</keyword>
<keyword id="KW-0460">Magnesium</keyword>
<keyword id="KW-0479">Metal-binding</keyword>
<keyword id="KW-0547">Nucleotide-binding</keyword>
<keyword id="KW-0717">Septation</keyword>
<proteinExistence type="inferred from homology"/>
<reference key="1">
    <citation type="journal article" date="2010" name="PLoS Genet.">
        <title>Genome sequence of the plant growth promoting endophytic bacterium Enterobacter sp. 638.</title>
        <authorList>
            <person name="Taghavi S."/>
            <person name="van der Lelie D."/>
            <person name="Hoffman A."/>
            <person name="Zhang Y.B."/>
            <person name="Walla M.D."/>
            <person name="Vangronsveld J."/>
            <person name="Newman L."/>
            <person name="Monchy S."/>
        </authorList>
    </citation>
    <scope>NUCLEOTIDE SEQUENCE [LARGE SCALE GENOMIC DNA]</scope>
    <source>
        <strain>638</strain>
    </source>
</reference>
<comment type="function">
    <text evidence="1">Necessary for normal cell division and for the maintenance of normal septation.</text>
</comment>
<comment type="cofactor">
    <cofactor evidence="1">
        <name>Mg(2+)</name>
        <dbReference type="ChEBI" id="CHEBI:18420"/>
    </cofactor>
</comment>
<comment type="similarity">
    <text evidence="1">Belongs to the TRAFAC class TrmE-Era-EngA-EngB-Septin-like GTPase superfamily. EngB GTPase family.</text>
</comment>
<accession>A4WGC5</accession>
<name>ENGB_ENT38</name>
<gene>
    <name evidence="1" type="primary">engB</name>
    <name type="ordered locus">Ent638_4101</name>
</gene>
<feature type="chain" id="PRO_1000059472" description="Probable GTP-binding protein EngB">
    <location>
        <begin position="1"/>
        <end position="208"/>
    </location>
</feature>
<feature type="domain" description="EngB-type G" evidence="1">
    <location>
        <begin position="25"/>
        <end position="199"/>
    </location>
</feature>
<feature type="binding site" evidence="1">
    <location>
        <begin position="33"/>
        <end position="40"/>
    </location>
    <ligand>
        <name>GTP</name>
        <dbReference type="ChEBI" id="CHEBI:37565"/>
    </ligand>
</feature>
<feature type="binding site" evidence="1">
    <location>
        <position position="40"/>
    </location>
    <ligand>
        <name>Mg(2+)</name>
        <dbReference type="ChEBI" id="CHEBI:18420"/>
    </ligand>
</feature>
<feature type="binding site" evidence="1">
    <location>
        <begin position="60"/>
        <end position="64"/>
    </location>
    <ligand>
        <name>GTP</name>
        <dbReference type="ChEBI" id="CHEBI:37565"/>
    </ligand>
</feature>
<feature type="binding site" evidence="1">
    <location>
        <position position="62"/>
    </location>
    <ligand>
        <name>Mg(2+)</name>
        <dbReference type="ChEBI" id="CHEBI:18420"/>
    </ligand>
</feature>
<feature type="binding site" evidence="1">
    <location>
        <begin position="78"/>
        <end position="81"/>
    </location>
    <ligand>
        <name>GTP</name>
        <dbReference type="ChEBI" id="CHEBI:37565"/>
    </ligand>
</feature>
<feature type="binding site" evidence="1">
    <location>
        <begin position="145"/>
        <end position="148"/>
    </location>
    <ligand>
        <name>GTP</name>
        <dbReference type="ChEBI" id="CHEBI:37565"/>
    </ligand>
</feature>
<feature type="binding site" evidence="1">
    <location>
        <begin position="178"/>
        <end position="180"/>
    </location>
    <ligand>
        <name>GTP</name>
        <dbReference type="ChEBI" id="CHEBI:37565"/>
    </ligand>
</feature>
<organism>
    <name type="scientific">Enterobacter sp. (strain 638)</name>
    <dbReference type="NCBI Taxonomy" id="399742"/>
    <lineage>
        <taxon>Bacteria</taxon>
        <taxon>Pseudomonadati</taxon>
        <taxon>Pseudomonadota</taxon>
        <taxon>Gammaproteobacteria</taxon>
        <taxon>Enterobacterales</taxon>
        <taxon>Enterobacteriaceae</taxon>
        <taxon>Enterobacter</taxon>
    </lineage>
</organism>
<protein>
    <recommendedName>
        <fullName evidence="1">Probable GTP-binding protein EngB</fullName>
    </recommendedName>
</protein>